<protein>
    <recommendedName>
        <fullName evidence="1">Na(+)-translocating NADH-quinone reductase subunit D</fullName>
        <shortName evidence="1">Na(+)-NQR subunit D</shortName>
        <shortName evidence="1">Na(+)-translocating NQR subunit D</shortName>
        <ecNumber evidence="1">7.2.1.1</ecNumber>
    </recommendedName>
    <alternativeName>
        <fullName evidence="1">NQR complex subunit D</fullName>
    </alternativeName>
    <alternativeName>
        <fullName evidence="1">NQR-1 subunit D</fullName>
    </alternativeName>
</protein>
<name>NQRD_CHLFF</name>
<accession>Q253X2</accession>
<evidence type="ECO:0000255" key="1">
    <source>
        <dbReference type="HAMAP-Rule" id="MF_00428"/>
    </source>
</evidence>
<dbReference type="EC" id="7.2.1.1" evidence="1"/>
<dbReference type="EMBL" id="AP006861">
    <property type="protein sequence ID" value="BAE81416.1"/>
    <property type="molecule type" value="Genomic_DNA"/>
</dbReference>
<dbReference type="RefSeq" id="WP_011458195.1">
    <property type="nucleotide sequence ID" value="NC_007899.1"/>
</dbReference>
<dbReference type="SMR" id="Q253X2"/>
<dbReference type="STRING" id="264202.CF0644"/>
<dbReference type="KEGG" id="cfe:CF0644"/>
<dbReference type="eggNOG" id="COG1347">
    <property type="taxonomic scope" value="Bacteria"/>
</dbReference>
<dbReference type="HOGENOM" id="CLU_046659_1_1_0"/>
<dbReference type="OrthoDB" id="9790976at2"/>
<dbReference type="Proteomes" id="UP000001260">
    <property type="component" value="Chromosome"/>
</dbReference>
<dbReference type="GO" id="GO:0005886">
    <property type="term" value="C:plasma membrane"/>
    <property type="evidence" value="ECO:0007669"/>
    <property type="project" value="UniProtKB-SubCell"/>
</dbReference>
<dbReference type="GO" id="GO:0016655">
    <property type="term" value="F:oxidoreductase activity, acting on NAD(P)H, quinone or similar compound as acceptor"/>
    <property type="evidence" value="ECO:0007669"/>
    <property type="project" value="UniProtKB-UniRule"/>
</dbReference>
<dbReference type="GO" id="GO:0006814">
    <property type="term" value="P:sodium ion transport"/>
    <property type="evidence" value="ECO:0007669"/>
    <property type="project" value="UniProtKB-UniRule"/>
</dbReference>
<dbReference type="HAMAP" id="MF_00428">
    <property type="entry name" value="NqrD"/>
    <property type="match status" value="1"/>
</dbReference>
<dbReference type="InterPro" id="IPR011292">
    <property type="entry name" value="NqrD"/>
</dbReference>
<dbReference type="InterPro" id="IPR003667">
    <property type="entry name" value="NqrDE/RnfAE"/>
</dbReference>
<dbReference type="NCBIfam" id="TIGR01939">
    <property type="entry name" value="nqrD"/>
    <property type="match status" value="1"/>
</dbReference>
<dbReference type="NCBIfam" id="NF006777">
    <property type="entry name" value="PRK09292.1"/>
    <property type="match status" value="1"/>
</dbReference>
<dbReference type="NCBIfam" id="NF009070">
    <property type="entry name" value="PRK12405.1"/>
    <property type="match status" value="1"/>
</dbReference>
<dbReference type="PANTHER" id="PTHR30586">
    <property type="entry name" value="ELECTRON TRANSPORT COMPLEX PROTEIN RNFE"/>
    <property type="match status" value="1"/>
</dbReference>
<dbReference type="PANTHER" id="PTHR30586:SF1">
    <property type="entry name" value="NA(+)-TRANSLOCATING NADH-QUINONE REDUCTASE SUBUNIT D"/>
    <property type="match status" value="1"/>
</dbReference>
<dbReference type="Pfam" id="PF02508">
    <property type="entry name" value="Rnf-Nqr"/>
    <property type="match status" value="1"/>
</dbReference>
<dbReference type="PIRSF" id="PIRSF006102">
    <property type="entry name" value="NQR_DE"/>
    <property type="match status" value="1"/>
</dbReference>
<gene>
    <name evidence="1" type="primary">nqrD</name>
    <name type="ordered locus">CF0644</name>
</gene>
<comment type="function">
    <text evidence="1">NQR complex catalyzes the reduction of ubiquinone-1 to ubiquinol by two successive reactions, coupled with the transport of Na(+) ions from the cytoplasm to the periplasm. NqrA to NqrE are probably involved in the second step, the conversion of ubisemiquinone to ubiquinol.</text>
</comment>
<comment type="catalytic activity">
    <reaction evidence="1">
        <text>a ubiquinone + n Na(+)(in) + NADH + H(+) = a ubiquinol + n Na(+)(out) + NAD(+)</text>
        <dbReference type="Rhea" id="RHEA:47748"/>
        <dbReference type="Rhea" id="RHEA-COMP:9565"/>
        <dbReference type="Rhea" id="RHEA-COMP:9566"/>
        <dbReference type="ChEBI" id="CHEBI:15378"/>
        <dbReference type="ChEBI" id="CHEBI:16389"/>
        <dbReference type="ChEBI" id="CHEBI:17976"/>
        <dbReference type="ChEBI" id="CHEBI:29101"/>
        <dbReference type="ChEBI" id="CHEBI:57540"/>
        <dbReference type="ChEBI" id="CHEBI:57945"/>
        <dbReference type="EC" id="7.2.1.1"/>
    </reaction>
</comment>
<comment type="subunit">
    <text evidence="1">Composed of six subunits; NqrA, NqrB, NqrC, NqrD, NqrE and NqrF.</text>
</comment>
<comment type="subcellular location">
    <subcellularLocation>
        <location evidence="1">Cell inner membrane</location>
        <topology evidence="1">Multi-pass membrane protein</topology>
    </subcellularLocation>
</comment>
<comment type="similarity">
    <text evidence="1">Belongs to the NqrDE/RnfAE family.</text>
</comment>
<feature type="chain" id="PRO_1000060150" description="Na(+)-translocating NADH-quinone reductase subunit D">
    <location>
        <begin position="1"/>
        <end position="213"/>
    </location>
</feature>
<feature type="transmembrane region" description="Helical" evidence="1">
    <location>
        <begin position="21"/>
        <end position="41"/>
    </location>
</feature>
<feature type="transmembrane region" description="Helical" evidence="1">
    <location>
        <begin position="42"/>
        <end position="62"/>
    </location>
</feature>
<feature type="transmembrane region" description="Helical" evidence="1">
    <location>
        <begin position="77"/>
        <end position="97"/>
    </location>
</feature>
<feature type="transmembrane region" description="Helical" evidence="1">
    <location>
        <begin position="101"/>
        <end position="121"/>
    </location>
</feature>
<feature type="transmembrane region" description="Helical" evidence="1">
    <location>
        <begin position="131"/>
        <end position="151"/>
    </location>
</feature>
<feature type="transmembrane region" description="Helical" evidence="1">
    <location>
        <begin position="183"/>
        <end position="203"/>
    </location>
</feature>
<keyword id="KW-0997">Cell inner membrane</keyword>
<keyword id="KW-1003">Cell membrane</keyword>
<keyword id="KW-0406">Ion transport</keyword>
<keyword id="KW-0472">Membrane</keyword>
<keyword id="KW-0520">NAD</keyword>
<keyword id="KW-0915">Sodium</keyword>
<keyword id="KW-0739">Sodium transport</keyword>
<keyword id="KW-1278">Translocase</keyword>
<keyword id="KW-0812">Transmembrane</keyword>
<keyword id="KW-1133">Transmembrane helix</keyword>
<keyword id="KW-0813">Transport</keyword>
<keyword id="KW-0830">Ubiquinone</keyword>
<sequence length="213" mass="23446">MADNKPYKSYFLDPLWNNNQPLIAILGICSALAVTTTVKTAITMGLAVSFVTGCSSFFVSLLRKITPDSVRMITQLIIISLFVIVIDQFLKAFFFNISKTLSVFVGLIITNCIVMGRAESLARNVPPIPAFLDGLASGLGYGWVLVFVSIIREFFGFGTLLGLQLIPKCFYASEAHPDGYENFGLMVLAPSAFFLLGIMIWVVNILRSKKAKR</sequence>
<organism>
    <name type="scientific">Chlamydia felis (strain Fe/C-56)</name>
    <name type="common">Chlamydophila felis</name>
    <dbReference type="NCBI Taxonomy" id="264202"/>
    <lineage>
        <taxon>Bacteria</taxon>
        <taxon>Pseudomonadati</taxon>
        <taxon>Chlamydiota</taxon>
        <taxon>Chlamydiia</taxon>
        <taxon>Chlamydiales</taxon>
        <taxon>Chlamydiaceae</taxon>
        <taxon>Chlamydia/Chlamydophila group</taxon>
        <taxon>Chlamydia</taxon>
    </lineage>
</organism>
<reference key="1">
    <citation type="journal article" date="2006" name="DNA Res.">
        <title>Genome sequence of the cat pathogen, Chlamydophila felis.</title>
        <authorList>
            <person name="Azuma Y."/>
            <person name="Hirakawa H."/>
            <person name="Yamashita A."/>
            <person name="Cai Y."/>
            <person name="Rahman M.A."/>
            <person name="Suzuki H."/>
            <person name="Mitaku S."/>
            <person name="Toh H."/>
            <person name="Goto S."/>
            <person name="Murakami T."/>
            <person name="Sugi K."/>
            <person name="Hayashi H."/>
            <person name="Fukushi H."/>
            <person name="Hattori M."/>
            <person name="Kuhara S."/>
            <person name="Shirai M."/>
        </authorList>
    </citation>
    <scope>NUCLEOTIDE SEQUENCE [LARGE SCALE GENOMIC DNA]</scope>
    <source>
        <strain>Fe/C-56</strain>
    </source>
</reference>
<proteinExistence type="inferred from homology"/>